<reference key="1">
    <citation type="journal article" date="1997" name="DNA Res.">
        <title>Construction of a contiguous 874-kb sequence of the Escherichia coli-K12 genome corresponding to 50.0-68.8 min on the linkage map and analysis of its sequence features.</title>
        <authorList>
            <person name="Yamamoto Y."/>
            <person name="Aiba H."/>
            <person name="Baba T."/>
            <person name="Hayashi K."/>
            <person name="Inada T."/>
            <person name="Isono K."/>
            <person name="Itoh T."/>
            <person name="Kimura S."/>
            <person name="Kitagawa M."/>
            <person name="Makino K."/>
            <person name="Miki T."/>
            <person name="Mitsuhashi N."/>
            <person name="Mizobuchi K."/>
            <person name="Mori H."/>
            <person name="Nakade S."/>
            <person name="Nakamura Y."/>
            <person name="Nashimoto H."/>
            <person name="Oshima T."/>
            <person name="Oyama S."/>
            <person name="Saito N."/>
            <person name="Sampei G."/>
            <person name="Satoh Y."/>
            <person name="Sivasundaram S."/>
            <person name="Tagami H."/>
            <person name="Takahashi H."/>
            <person name="Takeda J."/>
            <person name="Takemoto K."/>
            <person name="Uehara K."/>
            <person name="Wada C."/>
            <person name="Yamagata S."/>
            <person name="Horiuchi T."/>
        </authorList>
    </citation>
    <scope>NUCLEOTIDE SEQUENCE [LARGE SCALE GENOMIC DNA]</scope>
    <source>
        <strain>K12 / W3110 / ATCC 27325 / DSM 5911</strain>
    </source>
</reference>
<reference key="2">
    <citation type="journal article" date="1997" name="Science">
        <title>The complete genome sequence of Escherichia coli K-12.</title>
        <authorList>
            <person name="Blattner F.R."/>
            <person name="Plunkett G. III"/>
            <person name="Bloch C.A."/>
            <person name="Perna N.T."/>
            <person name="Burland V."/>
            <person name="Riley M."/>
            <person name="Collado-Vides J."/>
            <person name="Glasner J.D."/>
            <person name="Rode C.K."/>
            <person name="Mayhew G.F."/>
            <person name="Gregor J."/>
            <person name="Davis N.W."/>
            <person name="Kirkpatrick H.A."/>
            <person name="Goeden M.A."/>
            <person name="Rose D.J."/>
            <person name="Mau B."/>
            <person name="Shao Y."/>
        </authorList>
    </citation>
    <scope>NUCLEOTIDE SEQUENCE [LARGE SCALE GENOMIC DNA]</scope>
    <source>
        <strain>K12 / MG1655 / ATCC 47076</strain>
    </source>
</reference>
<reference key="3">
    <citation type="journal article" date="2006" name="Mol. Syst. Biol.">
        <title>Highly accurate genome sequences of Escherichia coli K-12 strains MG1655 and W3110.</title>
        <authorList>
            <person name="Hayashi K."/>
            <person name="Morooka N."/>
            <person name="Yamamoto Y."/>
            <person name="Fujita K."/>
            <person name="Isono K."/>
            <person name="Choi S."/>
            <person name="Ohtsubo E."/>
            <person name="Baba T."/>
            <person name="Wanner B.L."/>
            <person name="Mori H."/>
            <person name="Horiuchi T."/>
        </authorList>
    </citation>
    <scope>NUCLEOTIDE SEQUENCE [LARGE SCALE GENOMIC DNA]</scope>
    <scope>SEQUENCE REVISION TO 98-119</scope>
    <source>
        <strain>K12 / W3110 / ATCC 27325 / DSM 5911</strain>
    </source>
</reference>
<reference key="4">
    <citation type="journal article" date="1999" name="Electrophoresis">
        <title>Enrichment of low abundance proteins of Escherichia coli by hydroxyapatite chromatography.</title>
        <authorList>
            <person name="Fountoulakis M."/>
            <person name="Takacs M.-F."/>
            <person name="Berndt P."/>
            <person name="Langen H."/>
            <person name="Takacs B."/>
        </authorList>
    </citation>
    <scope>IDENTIFICATION BY MASS SPECTROMETRY</scope>
    <source>
        <strain>B / BL21</strain>
    </source>
</reference>
<comment type="similarity">
    <text evidence="2">Belongs to the ArsC family.</text>
</comment>
<protein>
    <recommendedName>
        <fullName>Uncharacterized protein YfgD</fullName>
    </recommendedName>
</protein>
<proteinExistence type="evidence at protein level"/>
<feature type="chain" id="PRO_0000162581" description="Uncharacterized protein YfgD">
    <location>
        <begin position="1"/>
        <end position="119"/>
    </location>
</feature>
<feature type="active site" evidence="1">
    <location>
        <position position="13"/>
    </location>
</feature>
<keyword id="KW-0560">Oxidoreductase</keyword>
<keyword id="KW-1185">Reference proteome</keyword>
<sequence>MTKQVKIYHNPRCSKSRETLNLLKENGVEPEVVLYLETPADAATLRDLLKILGMNSARELMRQKEDLYKELNLADSSLSEEALIQAMVDNPKLMERPIVVANGKARIGRPPEQVLEIVG</sequence>
<name>YFGD_ECOLI</name>
<accession>P76569</accession>
<accession>P76978</accession>
<evidence type="ECO:0000255" key="1">
    <source>
        <dbReference type="PROSITE-ProRule" id="PRU01282"/>
    </source>
</evidence>
<evidence type="ECO:0000305" key="2"/>
<gene>
    <name type="primary">yfgD</name>
    <name type="ordered locus">b2495</name>
    <name type="ordered locus">JW2480</name>
</gene>
<dbReference type="EMBL" id="U00096">
    <property type="protein sequence ID" value="AAC75548.1"/>
    <property type="molecule type" value="Genomic_DNA"/>
</dbReference>
<dbReference type="EMBL" id="AP009048">
    <property type="protein sequence ID" value="BAA16383.2"/>
    <property type="molecule type" value="Genomic_DNA"/>
</dbReference>
<dbReference type="PIR" id="F65025">
    <property type="entry name" value="F65025"/>
</dbReference>
<dbReference type="RefSeq" id="NP_416990.1">
    <property type="nucleotide sequence ID" value="NC_000913.3"/>
</dbReference>
<dbReference type="SMR" id="P76569"/>
<dbReference type="BioGRID" id="4261435">
    <property type="interactions" value="24"/>
</dbReference>
<dbReference type="BioGRID" id="851313">
    <property type="interactions" value="5"/>
</dbReference>
<dbReference type="FunCoup" id="P76569">
    <property type="interactions" value="156"/>
</dbReference>
<dbReference type="IntAct" id="P76569">
    <property type="interactions" value="12"/>
</dbReference>
<dbReference type="STRING" id="511145.b2495"/>
<dbReference type="jPOST" id="P76569"/>
<dbReference type="PaxDb" id="511145-b2495"/>
<dbReference type="EnsemblBacteria" id="AAC75548">
    <property type="protein sequence ID" value="AAC75548"/>
    <property type="gene ID" value="b2495"/>
</dbReference>
<dbReference type="GeneID" id="946974"/>
<dbReference type="KEGG" id="ecj:JW2480"/>
<dbReference type="KEGG" id="eco:b2495"/>
<dbReference type="KEGG" id="ecoc:C3026_13840"/>
<dbReference type="PATRIC" id="fig|1411691.4.peg.4244"/>
<dbReference type="EchoBASE" id="EB3952"/>
<dbReference type="eggNOG" id="COG1393">
    <property type="taxonomic scope" value="Bacteria"/>
</dbReference>
<dbReference type="HOGENOM" id="CLU_116644_0_1_6"/>
<dbReference type="InParanoid" id="P76569"/>
<dbReference type="OMA" id="DMMRTKE"/>
<dbReference type="OrthoDB" id="9790554at2"/>
<dbReference type="PhylomeDB" id="P76569"/>
<dbReference type="BioCyc" id="EcoCyc:G7312-MONOMER"/>
<dbReference type="PRO" id="PR:P76569"/>
<dbReference type="Proteomes" id="UP000000625">
    <property type="component" value="Chromosome"/>
</dbReference>
<dbReference type="GO" id="GO:0005829">
    <property type="term" value="C:cytosol"/>
    <property type="evidence" value="ECO:0000314"/>
    <property type="project" value="EcoCyc"/>
</dbReference>
<dbReference type="GO" id="GO:0008794">
    <property type="term" value="F:arsenate reductase (glutaredoxin) activity"/>
    <property type="evidence" value="ECO:0007669"/>
    <property type="project" value="InterPro"/>
</dbReference>
<dbReference type="CDD" id="cd03034">
    <property type="entry name" value="ArsC_ArsC"/>
    <property type="match status" value="1"/>
</dbReference>
<dbReference type="FunFam" id="3.40.30.10:FF:000070">
    <property type="entry name" value="Arsenate reductase"/>
    <property type="match status" value="1"/>
</dbReference>
<dbReference type="Gene3D" id="3.40.30.10">
    <property type="entry name" value="Glutaredoxin"/>
    <property type="match status" value="1"/>
</dbReference>
<dbReference type="InterPro" id="IPR006659">
    <property type="entry name" value="Arsenate_reductase"/>
</dbReference>
<dbReference type="InterPro" id="IPR006660">
    <property type="entry name" value="Arsenate_reductase-like"/>
</dbReference>
<dbReference type="InterPro" id="IPR036249">
    <property type="entry name" value="Thioredoxin-like_sf"/>
</dbReference>
<dbReference type="NCBIfam" id="TIGR00014">
    <property type="entry name" value="arsC"/>
    <property type="match status" value="1"/>
</dbReference>
<dbReference type="PANTHER" id="PTHR30041">
    <property type="entry name" value="ARSENATE REDUCTASE"/>
    <property type="match status" value="1"/>
</dbReference>
<dbReference type="PANTHER" id="PTHR30041:SF4">
    <property type="entry name" value="ARSENATE REDUCTASE"/>
    <property type="match status" value="1"/>
</dbReference>
<dbReference type="Pfam" id="PF03960">
    <property type="entry name" value="ArsC"/>
    <property type="match status" value="1"/>
</dbReference>
<dbReference type="SUPFAM" id="SSF52833">
    <property type="entry name" value="Thioredoxin-like"/>
    <property type="match status" value="1"/>
</dbReference>
<dbReference type="PROSITE" id="PS51353">
    <property type="entry name" value="ARSC"/>
    <property type="match status" value="1"/>
</dbReference>
<organism>
    <name type="scientific">Escherichia coli (strain K12)</name>
    <dbReference type="NCBI Taxonomy" id="83333"/>
    <lineage>
        <taxon>Bacteria</taxon>
        <taxon>Pseudomonadati</taxon>
        <taxon>Pseudomonadota</taxon>
        <taxon>Gammaproteobacteria</taxon>
        <taxon>Enterobacterales</taxon>
        <taxon>Enterobacteriaceae</taxon>
        <taxon>Escherichia</taxon>
    </lineage>
</organism>